<organism>
    <name type="scientific">Akkermansia muciniphila (strain ATCC BAA-835 / DSM 22959 / JCM 33894 / BCRC 81048 / CCUG 64013 / CIP 107961 / Muc)</name>
    <dbReference type="NCBI Taxonomy" id="349741"/>
    <lineage>
        <taxon>Bacteria</taxon>
        <taxon>Pseudomonadati</taxon>
        <taxon>Verrucomicrobiota</taxon>
        <taxon>Verrucomicrobiia</taxon>
        <taxon>Verrucomicrobiales</taxon>
        <taxon>Akkermansiaceae</taxon>
        <taxon>Akkermansia</taxon>
    </lineage>
</organism>
<name>RL20_AKKM8</name>
<accession>B2ULJ1</accession>
<protein>
    <recommendedName>
        <fullName evidence="1">Large ribosomal subunit protein bL20</fullName>
    </recommendedName>
    <alternativeName>
        <fullName evidence="2">50S ribosomal protein L20</fullName>
    </alternativeName>
</protein>
<sequence length="127" mass="14768">MPRATNGPASRKRRKRILLRAKGFRGFRSKLFRYAKDAVYKAWQYEYRDRKRRKGQFRRLWIARISAAVRDRGLTYSRFMEGLKAANIDLDRKVLADLAVSDEKAFDVIFAQAKKAIEAKDGAALRA</sequence>
<reference key="1">
    <citation type="journal article" date="2011" name="PLoS ONE">
        <title>The genome of Akkermansia muciniphila, a dedicated intestinal mucin degrader, and its use in exploring intestinal metagenomes.</title>
        <authorList>
            <person name="van Passel M.W."/>
            <person name="Kant R."/>
            <person name="Zoetendal E.G."/>
            <person name="Plugge C.M."/>
            <person name="Derrien M."/>
            <person name="Malfatti S.A."/>
            <person name="Chain P.S."/>
            <person name="Woyke T."/>
            <person name="Palva A."/>
            <person name="de Vos W.M."/>
            <person name="Smidt H."/>
        </authorList>
    </citation>
    <scope>NUCLEOTIDE SEQUENCE [LARGE SCALE GENOMIC DNA]</scope>
    <source>
        <strain>ATCC BAA-835 / DSM 22959 / JCM 33894 / BCRC 81048 / CCUG 64013 / CIP 107961 / Muc</strain>
    </source>
</reference>
<comment type="function">
    <text evidence="1">Binds directly to 23S ribosomal RNA and is necessary for the in vitro assembly process of the 50S ribosomal subunit. It is not involved in the protein synthesizing functions of that subunit.</text>
</comment>
<comment type="similarity">
    <text evidence="1">Belongs to the bacterial ribosomal protein bL20 family.</text>
</comment>
<evidence type="ECO:0000255" key="1">
    <source>
        <dbReference type="HAMAP-Rule" id="MF_00382"/>
    </source>
</evidence>
<evidence type="ECO:0000305" key="2"/>
<feature type="chain" id="PRO_1000122264" description="Large ribosomal subunit protein bL20">
    <location>
        <begin position="1"/>
        <end position="127"/>
    </location>
</feature>
<dbReference type="EMBL" id="CP001071">
    <property type="protein sequence ID" value="ACD05378.1"/>
    <property type="molecule type" value="Genomic_DNA"/>
</dbReference>
<dbReference type="RefSeq" id="WP_012420593.1">
    <property type="nucleotide sequence ID" value="NZ_CP071807.1"/>
</dbReference>
<dbReference type="SMR" id="B2ULJ1"/>
<dbReference type="STRING" id="349741.Amuc_1557"/>
<dbReference type="PaxDb" id="349741-Amuc_1557"/>
<dbReference type="KEGG" id="amu:Amuc_1557"/>
<dbReference type="eggNOG" id="COG0292">
    <property type="taxonomic scope" value="Bacteria"/>
</dbReference>
<dbReference type="HOGENOM" id="CLU_123265_0_1_0"/>
<dbReference type="OrthoDB" id="9808966at2"/>
<dbReference type="BioCyc" id="AMUC349741:G1GBX-1662-MONOMER"/>
<dbReference type="Proteomes" id="UP000001031">
    <property type="component" value="Chromosome"/>
</dbReference>
<dbReference type="GO" id="GO:1990904">
    <property type="term" value="C:ribonucleoprotein complex"/>
    <property type="evidence" value="ECO:0007669"/>
    <property type="project" value="UniProtKB-KW"/>
</dbReference>
<dbReference type="GO" id="GO:0005840">
    <property type="term" value="C:ribosome"/>
    <property type="evidence" value="ECO:0007669"/>
    <property type="project" value="UniProtKB-KW"/>
</dbReference>
<dbReference type="GO" id="GO:0019843">
    <property type="term" value="F:rRNA binding"/>
    <property type="evidence" value="ECO:0007669"/>
    <property type="project" value="UniProtKB-UniRule"/>
</dbReference>
<dbReference type="GO" id="GO:0003735">
    <property type="term" value="F:structural constituent of ribosome"/>
    <property type="evidence" value="ECO:0007669"/>
    <property type="project" value="InterPro"/>
</dbReference>
<dbReference type="GO" id="GO:0000027">
    <property type="term" value="P:ribosomal large subunit assembly"/>
    <property type="evidence" value="ECO:0007669"/>
    <property type="project" value="UniProtKB-UniRule"/>
</dbReference>
<dbReference type="GO" id="GO:0006412">
    <property type="term" value="P:translation"/>
    <property type="evidence" value="ECO:0007669"/>
    <property type="project" value="InterPro"/>
</dbReference>
<dbReference type="CDD" id="cd07026">
    <property type="entry name" value="Ribosomal_L20"/>
    <property type="match status" value="1"/>
</dbReference>
<dbReference type="FunFam" id="1.10.1900.20:FF:000001">
    <property type="entry name" value="50S ribosomal protein L20"/>
    <property type="match status" value="1"/>
</dbReference>
<dbReference type="Gene3D" id="6.10.160.10">
    <property type="match status" value="1"/>
</dbReference>
<dbReference type="Gene3D" id="1.10.1900.20">
    <property type="entry name" value="Ribosomal protein L20"/>
    <property type="match status" value="1"/>
</dbReference>
<dbReference type="HAMAP" id="MF_00382">
    <property type="entry name" value="Ribosomal_bL20"/>
    <property type="match status" value="1"/>
</dbReference>
<dbReference type="InterPro" id="IPR005813">
    <property type="entry name" value="Ribosomal_bL20"/>
</dbReference>
<dbReference type="InterPro" id="IPR049946">
    <property type="entry name" value="RIBOSOMAL_L20_CS"/>
</dbReference>
<dbReference type="InterPro" id="IPR035566">
    <property type="entry name" value="Ribosomal_protein_bL20_C"/>
</dbReference>
<dbReference type="NCBIfam" id="TIGR01032">
    <property type="entry name" value="rplT_bact"/>
    <property type="match status" value="1"/>
</dbReference>
<dbReference type="PANTHER" id="PTHR10986">
    <property type="entry name" value="39S RIBOSOMAL PROTEIN L20"/>
    <property type="match status" value="1"/>
</dbReference>
<dbReference type="Pfam" id="PF00453">
    <property type="entry name" value="Ribosomal_L20"/>
    <property type="match status" value="1"/>
</dbReference>
<dbReference type="PRINTS" id="PR00062">
    <property type="entry name" value="RIBOSOMALL20"/>
</dbReference>
<dbReference type="SUPFAM" id="SSF74731">
    <property type="entry name" value="Ribosomal protein L20"/>
    <property type="match status" value="1"/>
</dbReference>
<dbReference type="PROSITE" id="PS00937">
    <property type="entry name" value="RIBOSOMAL_L20"/>
    <property type="match status" value="1"/>
</dbReference>
<gene>
    <name evidence="1" type="primary">rplT</name>
    <name type="ordered locus">Amuc_1557</name>
</gene>
<keyword id="KW-1185">Reference proteome</keyword>
<keyword id="KW-0687">Ribonucleoprotein</keyword>
<keyword id="KW-0689">Ribosomal protein</keyword>
<keyword id="KW-0694">RNA-binding</keyword>
<keyword id="KW-0699">rRNA-binding</keyword>
<proteinExistence type="inferred from homology"/>